<keyword id="KW-0963">Cytoplasm</keyword>
<keyword id="KW-0210">Decarboxylase</keyword>
<keyword id="KW-0456">Lyase</keyword>
<keyword id="KW-0627">Porphyrin biosynthesis</keyword>
<keyword id="KW-1185">Reference proteome</keyword>
<proteinExistence type="inferred from homology"/>
<name>DCUP_ALIF1</name>
<sequence length="355" mass="39355">MTELKNDRYLRALLKQPVDYTPVWMMRQAGRYLPEYKATRAEAGDFMSLCKNAELASEVTLQPLRRFPLDAAILFSDILTIPDAMGLGLYFETGEGPKFERPITCKADVDKIGLPDPEGELQYVMNAVRQIRKDLKGEVPLIGFSGSPWTLATYMVEGGSSKAFTKIKKMMYAEPATLHLLLDKLADSVIEYLNAQIKAGAQSVMVFDTWGGVLTPRDYNEFSLRYMHKIVDGLIRENEGRRVPVTLFTKNGGMWLESIAATGCDAVGLDWTINIADAKARIGDKVALQGNMDPSILYAQPERIRQEVGTILEGFGDAGTGHVFNLGHGIHLDVPPENAGVFVDAVHDLSKPYHK</sequence>
<feature type="chain" id="PRO_1000023996" description="Uroporphyrinogen decarboxylase">
    <location>
        <begin position="1"/>
        <end position="355"/>
    </location>
</feature>
<feature type="binding site" evidence="1">
    <location>
        <begin position="27"/>
        <end position="31"/>
    </location>
    <ligand>
        <name>substrate</name>
    </ligand>
</feature>
<feature type="binding site" evidence="1">
    <location>
        <position position="77"/>
    </location>
    <ligand>
        <name>substrate</name>
    </ligand>
</feature>
<feature type="binding site" evidence="1">
    <location>
        <position position="154"/>
    </location>
    <ligand>
        <name>substrate</name>
    </ligand>
</feature>
<feature type="binding site" evidence="1">
    <location>
        <position position="209"/>
    </location>
    <ligand>
        <name>substrate</name>
    </ligand>
</feature>
<feature type="binding site" evidence="1">
    <location>
        <position position="328"/>
    </location>
    <ligand>
        <name>substrate</name>
    </ligand>
</feature>
<feature type="site" description="Transition state stabilizer" evidence="1">
    <location>
        <position position="77"/>
    </location>
</feature>
<accession>Q5E249</accession>
<gene>
    <name evidence="1" type="primary">hemE</name>
    <name type="ordered locus">VF_2402</name>
</gene>
<dbReference type="EC" id="4.1.1.37" evidence="1"/>
<dbReference type="EMBL" id="CP000020">
    <property type="protein sequence ID" value="AAW86897.1"/>
    <property type="molecule type" value="Genomic_DNA"/>
</dbReference>
<dbReference type="RefSeq" id="WP_005421300.1">
    <property type="nucleotide sequence ID" value="NZ_CAWLES010000001.1"/>
</dbReference>
<dbReference type="RefSeq" id="YP_205785.1">
    <property type="nucleotide sequence ID" value="NC_006840.2"/>
</dbReference>
<dbReference type="SMR" id="Q5E249"/>
<dbReference type="STRING" id="312309.VF_2402"/>
<dbReference type="EnsemblBacteria" id="AAW86897">
    <property type="protein sequence ID" value="AAW86897"/>
    <property type="gene ID" value="VF_2402"/>
</dbReference>
<dbReference type="GeneID" id="54165119"/>
<dbReference type="KEGG" id="vfi:VF_2402"/>
<dbReference type="PATRIC" id="fig|312309.11.peg.2437"/>
<dbReference type="eggNOG" id="COG0407">
    <property type="taxonomic scope" value="Bacteria"/>
</dbReference>
<dbReference type="HOGENOM" id="CLU_040933_0_0_6"/>
<dbReference type="OrthoDB" id="9806656at2"/>
<dbReference type="UniPathway" id="UPA00251">
    <property type="reaction ID" value="UER00321"/>
</dbReference>
<dbReference type="Proteomes" id="UP000000537">
    <property type="component" value="Chromosome I"/>
</dbReference>
<dbReference type="GO" id="GO:0005829">
    <property type="term" value="C:cytosol"/>
    <property type="evidence" value="ECO:0007669"/>
    <property type="project" value="TreeGrafter"/>
</dbReference>
<dbReference type="GO" id="GO:0004853">
    <property type="term" value="F:uroporphyrinogen decarboxylase activity"/>
    <property type="evidence" value="ECO:0007669"/>
    <property type="project" value="UniProtKB-UniRule"/>
</dbReference>
<dbReference type="GO" id="GO:0019353">
    <property type="term" value="P:protoporphyrinogen IX biosynthetic process from glutamate"/>
    <property type="evidence" value="ECO:0007669"/>
    <property type="project" value="TreeGrafter"/>
</dbReference>
<dbReference type="CDD" id="cd00717">
    <property type="entry name" value="URO-D"/>
    <property type="match status" value="1"/>
</dbReference>
<dbReference type="FunFam" id="3.20.20.210:FF:000001">
    <property type="entry name" value="Uroporphyrinogen decarboxylase"/>
    <property type="match status" value="1"/>
</dbReference>
<dbReference type="Gene3D" id="3.20.20.210">
    <property type="match status" value="1"/>
</dbReference>
<dbReference type="HAMAP" id="MF_00218">
    <property type="entry name" value="URO_D"/>
    <property type="match status" value="1"/>
</dbReference>
<dbReference type="InterPro" id="IPR038071">
    <property type="entry name" value="UROD/MetE-like_sf"/>
</dbReference>
<dbReference type="InterPro" id="IPR006361">
    <property type="entry name" value="Uroporphyrinogen_deCO2ase_HemE"/>
</dbReference>
<dbReference type="InterPro" id="IPR000257">
    <property type="entry name" value="Uroporphyrinogen_deCOase"/>
</dbReference>
<dbReference type="NCBIfam" id="TIGR01464">
    <property type="entry name" value="hemE"/>
    <property type="match status" value="1"/>
</dbReference>
<dbReference type="PANTHER" id="PTHR21091">
    <property type="entry name" value="METHYLTETRAHYDROFOLATE:HOMOCYSTEINE METHYLTRANSFERASE RELATED"/>
    <property type="match status" value="1"/>
</dbReference>
<dbReference type="PANTHER" id="PTHR21091:SF169">
    <property type="entry name" value="UROPORPHYRINOGEN DECARBOXYLASE"/>
    <property type="match status" value="1"/>
</dbReference>
<dbReference type="Pfam" id="PF01208">
    <property type="entry name" value="URO-D"/>
    <property type="match status" value="1"/>
</dbReference>
<dbReference type="SUPFAM" id="SSF51726">
    <property type="entry name" value="UROD/MetE-like"/>
    <property type="match status" value="1"/>
</dbReference>
<dbReference type="PROSITE" id="PS00906">
    <property type="entry name" value="UROD_1"/>
    <property type="match status" value="1"/>
</dbReference>
<dbReference type="PROSITE" id="PS00907">
    <property type="entry name" value="UROD_2"/>
    <property type="match status" value="1"/>
</dbReference>
<comment type="function">
    <text evidence="1">Catalyzes the decarboxylation of four acetate groups of uroporphyrinogen-III to yield coproporphyrinogen-III.</text>
</comment>
<comment type="catalytic activity">
    <reaction evidence="1">
        <text>uroporphyrinogen III + 4 H(+) = coproporphyrinogen III + 4 CO2</text>
        <dbReference type="Rhea" id="RHEA:19865"/>
        <dbReference type="ChEBI" id="CHEBI:15378"/>
        <dbReference type="ChEBI" id="CHEBI:16526"/>
        <dbReference type="ChEBI" id="CHEBI:57308"/>
        <dbReference type="ChEBI" id="CHEBI:57309"/>
        <dbReference type="EC" id="4.1.1.37"/>
    </reaction>
</comment>
<comment type="pathway">
    <text evidence="1">Porphyrin-containing compound metabolism; protoporphyrin-IX biosynthesis; coproporphyrinogen-III from 5-aminolevulinate: step 4/4.</text>
</comment>
<comment type="subunit">
    <text evidence="1">Homodimer.</text>
</comment>
<comment type="subcellular location">
    <subcellularLocation>
        <location evidence="1">Cytoplasm</location>
    </subcellularLocation>
</comment>
<comment type="similarity">
    <text evidence="1">Belongs to the uroporphyrinogen decarboxylase family.</text>
</comment>
<evidence type="ECO:0000255" key="1">
    <source>
        <dbReference type="HAMAP-Rule" id="MF_00218"/>
    </source>
</evidence>
<organism>
    <name type="scientific">Aliivibrio fischeri (strain ATCC 700601 / ES114)</name>
    <name type="common">Vibrio fischeri</name>
    <dbReference type="NCBI Taxonomy" id="312309"/>
    <lineage>
        <taxon>Bacteria</taxon>
        <taxon>Pseudomonadati</taxon>
        <taxon>Pseudomonadota</taxon>
        <taxon>Gammaproteobacteria</taxon>
        <taxon>Vibrionales</taxon>
        <taxon>Vibrionaceae</taxon>
        <taxon>Aliivibrio</taxon>
    </lineage>
</organism>
<reference key="1">
    <citation type="journal article" date="2005" name="Proc. Natl. Acad. Sci. U.S.A.">
        <title>Complete genome sequence of Vibrio fischeri: a symbiotic bacterium with pathogenic congeners.</title>
        <authorList>
            <person name="Ruby E.G."/>
            <person name="Urbanowski M."/>
            <person name="Campbell J."/>
            <person name="Dunn A."/>
            <person name="Faini M."/>
            <person name="Gunsalus R."/>
            <person name="Lostroh P."/>
            <person name="Lupp C."/>
            <person name="McCann J."/>
            <person name="Millikan D."/>
            <person name="Schaefer A."/>
            <person name="Stabb E."/>
            <person name="Stevens A."/>
            <person name="Visick K."/>
            <person name="Whistler C."/>
            <person name="Greenberg E.P."/>
        </authorList>
    </citation>
    <scope>NUCLEOTIDE SEQUENCE [LARGE SCALE GENOMIC DNA]</scope>
    <source>
        <strain>ATCC 700601 / ES114</strain>
    </source>
</reference>
<protein>
    <recommendedName>
        <fullName evidence="1">Uroporphyrinogen decarboxylase</fullName>
        <shortName evidence="1">UPD</shortName>
        <shortName evidence="1">URO-D</shortName>
        <ecNumber evidence="1">4.1.1.37</ecNumber>
    </recommendedName>
</protein>